<organism>
    <name type="scientific">Mycoplasma pneumoniae (strain ATCC 29342 / M129 / Subtype 1)</name>
    <name type="common">Mycoplasmoides pneumoniae</name>
    <dbReference type="NCBI Taxonomy" id="272634"/>
    <lineage>
        <taxon>Bacteria</taxon>
        <taxon>Bacillati</taxon>
        <taxon>Mycoplasmatota</taxon>
        <taxon>Mycoplasmoidales</taxon>
        <taxon>Mycoplasmoidaceae</taxon>
        <taxon>Mycoplasmoides</taxon>
    </lineage>
</organism>
<reference key="1">
    <citation type="journal article" date="1996" name="Nucleic Acids Res.">
        <title>Complete sequence analysis of the genome of the bacterium Mycoplasma pneumoniae.</title>
        <authorList>
            <person name="Himmelreich R."/>
            <person name="Hilbert H."/>
            <person name="Plagens H."/>
            <person name="Pirkl E."/>
            <person name="Li B.-C."/>
            <person name="Herrmann R."/>
        </authorList>
    </citation>
    <scope>NUCLEOTIDE SEQUENCE [LARGE SCALE GENOMIC DNA]</scope>
    <source>
        <strain>ATCC 29342 / M129 / Subtype 1</strain>
    </source>
</reference>
<accession>P75178</accession>
<sequence length="146" mass="16791">MQKTSMLTKEQANKRRQWYIVDAAGLVLGKLAVKAADLIRGKNKVDFTPNQDCGDYLIIINSDQVVLTGNKKENEFWYHHSQYIGGIKKVSGRDMLKKQSDKLVYNAVKGMLPDNRLSRRWITKVHVFKGDKHNMEAQKPTTLNWS</sequence>
<feature type="chain" id="PRO_0000133743" description="Large ribosomal subunit protein uL13">
    <location>
        <begin position="1"/>
        <end position="146"/>
    </location>
</feature>
<feature type="strand" evidence="4">
    <location>
        <begin position="19"/>
        <end position="22"/>
    </location>
</feature>
<feature type="helix" evidence="4">
    <location>
        <begin position="28"/>
        <end position="40"/>
    </location>
</feature>
<feature type="turn" evidence="4">
    <location>
        <begin position="41"/>
        <end position="43"/>
    </location>
</feature>
<feature type="strand" evidence="4">
    <location>
        <begin position="44"/>
        <end position="46"/>
    </location>
</feature>
<feature type="strand" evidence="4">
    <location>
        <begin position="57"/>
        <end position="60"/>
    </location>
</feature>
<feature type="helix" evidence="3">
    <location>
        <begin position="62"/>
        <end position="64"/>
    </location>
</feature>
<feature type="helix" evidence="4">
    <location>
        <begin position="71"/>
        <end position="74"/>
    </location>
</feature>
<feature type="strand" evidence="4">
    <location>
        <begin position="76"/>
        <end position="80"/>
    </location>
</feature>
<feature type="strand" evidence="4">
    <location>
        <begin position="82"/>
        <end position="85"/>
    </location>
</feature>
<feature type="strand" evidence="4">
    <location>
        <begin position="87"/>
        <end position="91"/>
    </location>
</feature>
<feature type="helix" evidence="4">
    <location>
        <begin position="92"/>
        <end position="97"/>
    </location>
</feature>
<feature type="helix" evidence="4">
    <location>
        <begin position="100"/>
        <end position="110"/>
    </location>
</feature>
<feature type="strand" evidence="4">
    <location>
        <begin position="114"/>
        <end position="117"/>
    </location>
</feature>
<feature type="helix" evidence="4">
    <location>
        <begin position="118"/>
        <end position="123"/>
    </location>
</feature>
<feature type="strand" evidence="4">
    <location>
        <begin position="125"/>
        <end position="127"/>
    </location>
</feature>
<feature type="strand" evidence="4">
    <location>
        <begin position="129"/>
        <end position="131"/>
    </location>
</feature>
<feature type="helix" evidence="4">
    <location>
        <begin position="136"/>
        <end position="138"/>
    </location>
</feature>
<evidence type="ECO:0000255" key="1">
    <source>
        <dbReference type="HAMAP-Rule" id="MF_01366"/>
    </source>
</evidence>
<evidence type="ECO:0000305" key="2"/>
<evidence type="ECO:0007829" key="3">
    <source>
        <dbReference type="PDB" id="7OOD"/>
    </source>
</evidence>
<evidence type="ECO:0007829" key="4">
    <source>
        <dbReference type="PDB" id="8P8B"/>
    </source>
</evidence>
<keyword id="KW-0002">3D-structure</keyword>
<keyword id="KW-1185">Reference proteome</keyword>
<keyword id="KW-0687">Ribonucleoprotein</keyword>
<keyword id="KW-0689">Ribosomal protein</keyword>
<dbReference type="EMBL" id="U00089">
    <property type="protein sequence ID" value="AAB95873.1"/>
    <property type="molecule type" value="Genomic_DNA"/>
</dbReference>
<dbReference type="PIR" id="S73551">
    <property type="entry name" value="S73551"/>
</dbReference>
<dbReference type="RefSeq" id="NP_110306.1">
    <property type="nucleotide sequence ID" value="NC_000912.1"/>
</dbReference>
<dbReference type="RefSeq" id="WP_010874974.1">
    <property type="nucleotide sequence ID" value="NZ_OU342337.1"/>
</dbReference>
<dbReference type="PDB" id="7OOD">
    <property type="method" value="EM"/>
    <property type="resolution" value="3.40 A"/>
    <property type="chains" value="i=1-146"/>
</dbReference>
<dbReference type="PDB" id="7P6Z">
    <property type="method" value="EM"/>
    <property type="resolution" value="3.50 A"/>
    <property type="chains" value="i=1-146"/>
</dbReference>
<dbReference type="PDB" id="7PAH">
    <property type="method" value="EM"/>
    <property type="resolution" value="9.50 A"/>
    <property type="chains" value="i=1-146"/>
</dbReference>
<dbReference type="PDB" id="7PAI">
    <property type="method" value="EM"/>
    <property type="resolution" value="6.70 A"/>
    <property type="chains" value="i=1-146"/>
</dbReference>
<dbReference type="PDB" id="7PAJ">
    <property type="method" value="EM"/>
    <property type="resolution" value="7.30 A"/>
    <property type="chains" value="i=1-146"/>
</dbReference>
<dbReference type="PDB" id="7PAK">
    <property type="method" value="EM"/>
    <property type="resolution" value="5.30 A"/>
    <property type="chains" value="i=1-146"/>
</dbReference>
<dbReference type="PDB" id="7PAL">
    <property type="method" value="EM"/>
    <property type="resolution" value="4.70 A"/>
    <property type="chains" value="i=1-146"/>
</dbReference>
<dbReference type="PDB" id="7PAM">
    <property type="method" value="EM"/>
    <property type="resolution" value="6.80 A"/>
    <property type="chains" value="i=1-146"/>
</dbReference>
<dbReference type="PDB" id="7PAN">
    <property type="method" value="EM"/>
    <property type="resolution" value="9.70 A"/>
    <property type="chains" value="i=1-146"/>
</dbReference>
<dbReference type="PDB" id="7PAO">
    <property type="method" value="EM"/>
    <property type="resolution" value="7.00 A"/>
    <property type="chains" value="i=1-146"/>
</dbReference>
<dbReference type="PDB" id="7PAQ">
    <property type="method" value="EM"/>
    <property type="resolution" value="8.90 A"/>
    <property type="chains" value="i=1-146"/>
</dbReference>
<dbReference type="PDB" id="7PAR">
    <property type="method" value="EM"/>
    <property type="resolution" value="8.20 A"/>
    <property type="chains" value="i=1-146"/>
</dbReference>
<dbReference type="PDB" id="7PAS">
    <property type="method" value="EM"/>
    <property type="resolution" value="16.00 A"/>
    <property type="chains" value="i=1-146"/>
</dbReference>
<dbReference type="PDB" id="7PAT">
    <property type="method" value="EM"/>
    <property type="resolution" value="9.20 A"/>
    <property type="chains" value="i=1-146"/>
</dbReference>
<dbReference type="PDB" id="7PAU">
    <property type="method" value="EM"/>
    <property type="resolution" value="8.30 A"/>
    <property type="chains" value="i=1-146"/>
</dbReference>
<dbReference type="PDB" id="7PH9">
    <property type="method" value="EM"/>
    <property type="resolution" value="8.70 A"/>
    <property type="chains" value="i=1-146"/>
</dbReference>
<dbReference type="PDB" id="7PHA">
    <property type="method" value="EM"/>
    <property type="resolution" value="8.50 A"/>
    <property type="chains" value="i=1-146"/>
</dbReference>
<dbReference type="PDB" id="7PHB">
    <property type="method" value="EM"/>
    <property type="resolution" value="4.90 A"/>
    <property type="chains" value="i=1-146"/>
</dbReference>
<dbReference type="PDB" id="7PHC">
    <property type="method" value="EM"/>
    <property type="resolution" value="9.90 A"/>
    <property type="chains" value="i=1-146"/>
</dbReference>
<dbReference type="PDB" id="7PI8">
    <property type="method" value="EM"/>
    <property type="resolution" value="8.90 A"/>
    <property type="chains" value="i=1-146"/>
</dbReference>
<dbReference type="PDB" id="7PI9">
    <property type="method" value="EM"/>
    <property type="resolution" value="6.30 A"/>
    <property type="chains" value="i=1-146"/>
</dbReference>
<dbReference type="PDB" id="7PIA">
    <property type="method" value="EM"/>
    <property type="resolution" value="13.60 A"/>
    <property type="chains" value="i=1-146"/>
</dbReference>
<dbReference type="PDB" id="7PIB">
    <property type="method" value="EM"/>
    <property type="resolution" value="4.70 A"/>
    <property type="chains" value="i=1-146"/>
</dbReference>
<dbReference type="PDB" id="7PIC">
    <property type="method" value="EM"/>
    <property type="resolution" value="9.10 A"/>
    <property type="chains" value="i=1-146"/>
</dbReference>
<dbReference type="PDB" id="7PIO">
    <property type="method" value="EM"/>
    <property type="resolution" value="9.50 A"/>
    <property type="chains" value="i=1-146"/>
</dbReference>
<dbReference type="PDB" id="7PIP">
    <property type="method" value="EM"/>
    <property type="resolution" value="9.30 A"/>
    <property type="chains" value="i=1-146"/>
</dbReference>
<dbReference type="PDB" id="7PIQ">
    <property type="method" value="EM"/>
    <property type="resolution" value="9.70 A"/>
    <property type="chains" value="i=1-146"/>
</dbReference>
<dbReference type="PDB" id="7PIR">
    <property type="method" value="EM"/>
    <property type="resolution" value="12.10 A"/>
    <property type="chains" value="i=1-146"/>
</dbReference>
<dbReference type="PDB" id="7PIS">
    <property type="method" value="EM"/>
    <property type="resolution" value="15.00 A"/>
    <property type="chains" value="i=1-146"/>
</dbReference>
<dbReference type="PDB" id="7PIT">
    <property type="method" value="EM"/>
    <property type="resolution" value="5.70 A"/>
    <property type="chains" value="i=1-146"/>
</dbReference>
<dbReference type="PDB" id="8P7X">
    <property type="method" value="EM"/>
    <property type="resolution" value="3.03 A"/>
    <property type="chains" value="i=1-146"/>
</dbReference>
<dbReference type="PDB" id="8P7Y">
    <property type="method" value="EM"/>
    <property type="resolution" value="3.70 A"/>
    <property type="chains" value="i=1-146"/>
</dbReference>
<dbReference type="PDB" id="8P8B">
    <property type="method" value="EM"/>
    <property type="resolution" value="2.90 A"/>
    <property type="chains" value="i=1-146"/>
</dbReference>
<dbReference type="PDB" id="8P8V">
    <property type="method" value="EM"/>
    <property type="resolution" value="8.70 A"/>
    <property type="chains" value="i=1-146"/>
</dbReference>
<dbReference type="PDB" id="8P8W">
    <property type="method" value="EM"/>
    <property type="resolution" value="8.70 A"/>
    <property type="chains" value="i=1-146"/>
</dbReference>
<dbReference type="PDBsum" id="7OOD"/>
<dbReference type="PDBsum" id="7P6Z"/>
<dbReference type="PDBsum" id="7PAH"/>
<dbReference type="PDBsum" id="7PAI"/>
<dbReference type="PDBsum" id="7PAJ"/>
<dbReference type="PDBsum" id="7PAK"/>
<dbReference type="PDBsum" id="7PAL"/>
<dbReference type="PDBsum" id="7PAM"/>
<dbReference type="PDBsum" id="7PAN"/>
<dbReference type="PDBsum" id="7PAO"/>
<dbReference type="PDBsum" id="7PAQ"/>
<dbReference type="PDBsum" id="7PAR"/>
<dbReference type="PDBsum" id="7PAS"/>
<dbReference type="PDBsum" id="7PAT"/>
<dbReference type="PDBsum" id="7PAU"/>
<dbReference type="PDBsum" id="7PH9"/>
<dbReference type="PDBsum" id="7PHA"/>
<dbReference type="PDBsum" id="7PHB"/>
<dbReference type="PDBsum" id="7PHC"/>
<dbReference type="PDBsum" id="7PI8"/>
<dbReference type="PDBsum" id="7PI9"/>
<dbReference type="PDBsum" id="7PIA"/>
<dbReference type="PDBsum" id="7PIB"/>
<dbReference type="PDBsum" id="7PIC"/>
<dbReference type="PDBsum" id="7PIO"/>
<dbReference type="PDBsum" id="7PIP"/>
<dbReference type="PDBsum" id="7PIQ"/>
<dbReference type="PDBsum" id="7PIR"/>
<dbReference type="PDBsum" id="7PIS"/>
<dbReference type="PDBsum" id="7PIT"/>
<dbReference type="PDBsum" id="8P7X"/>
<dbReference type="PDBsum" id="8P7Y"/>
<dbReference type="PDBsum" id="8P8B"/>
<dbReference type="PDBsum" id="8P8V"/>
<dbReference type="PDBsum" id="8P8W"/>
<dbReference type="EMDB" id="EMD-13234"/>
<dbReference type="EMDB" id="EMD-13272"/>
<dbReference type="EMDB" id="EMD-13273"/>
<dbReference type="EMDB" id="EMD-13274"/>
<dbReference type="EMDB" id="EMD-13275"/>
<dbReference type="EMDB" id="EMD-13276"/>
<dbReference type="EMDB" id="EMD-13277"/>
<dbReference type="EMDB" id="EMD-13278"/>
<dbReference type="EMDB" id="EMD-13279"/>
<dbReference type="EMDB" id="EMD-13280"/>
<dbReference type="EMDB" id="EMD-13281"/>
<dbReference type="EMDB" id="EMD-13282"/>
<dbReference type="EMDB" id="EMD-13285"/>
<dbReference type="EMDB" id="EMD-13286"/>
<dbReference type="EMDB" id="EMD-13410"/>
<dbReference type="EMDB" id="EMD-13411"/>
<dbReference type="EMDB" id="EMD-13412"/>
<dbReference type="EMDB" id="EMD-13413"/>
<dbReference type="EMDB" id="EMD-13432"/>
<dbReference type="EMDB" id="EMD-13433"/>
<dbReference type="EMDB" id="EMD-13434"/>
<dbReference type="EMDB" id="EMD-13435"/>
<dbReference type="EMDB" id="EMD-13436"/>
<dbReference type="EMDB" id="EMD-13445"/>
<dbReference type="EMDB" id="EMD-13446"/>
<dbReference type="EMDB" id="EMD-13447"/>
<dbReference type="EMDB" id="EMD-13448"/>
<dbReference type="EMDB" id="EMD-13449"/>
<dbReference type="EMDB" id="EMD-13450"/>
<dbReference type="SMR" id="P75178"/>
<dbReference type="STRING" id="272634.MPN_617"/>
<dbReference type="EnsemblBacteria" id="AAB95873">
    <property type="protein sequence ID" value="AAB95873"/>
    <property type="gene ID" value="MPN_617"/>
</dbReference>
<dbReference type="GeneID" id="66608697"/>
<dbReference type="KEGG" id="mpn:MPN_617"/>
<dbReference type="PATRIC" id="fig|272634.6.peg.681"/>
<dbReference type="HOGENOM" id="CLU_082184_2_2_14"/>
<dbReference type="OrthoDB" id="9801330at2"/>
<dbReference type="BioCyc" id="MPNE272634:G1GJ3-995-MONOMER"/>
<dbReference type="Proteomes" id="UP000000808">
    <property type="component" value="Chromosome"/>
</dbReference>
<dbReference type="GO" id="GO:0022625">
    <property type="term" value="C:cytosolic large ribosomal subunit"/>
    <property type="evidence" value="ECO:0007669"/>
    <property type="project" value="TreeGrafter"/>
</dbReference>
<dbReference type="GO" id="GO:0003729">
    <property type="term" value="F:mRNA binding"/>
    <property type="evidence" value="ECO:0007669"/>
    <property type="project" value="TreeGrafter"/>
</dbReference>
<dbReference type="GO" id="GO:0003735">
    <property type="term" value="F:structural constituent of ribosome"/>
    <property type="evidence" value="ECO:0007669"/>
    <property type="project" value="InterPro"/>
</dbReference>
<dbReference type="GO" id="GO:0017148">
    <property type="term" value="P:negative regulation of translation"/>
    <property type="evidence" value="ECO:0007669"/>
    <property type="project" value="TreeGrafter"/>
</dbReference>
<dbReference type="GO" id="GO:0006412">
    <property type="term" value="P:translation"/>
    <property type="evidence" value="ECO:0007669"/>
    <property type="project" value="UniProtKB-UniRule"/>
</dbReference>
<dbReference type="CDD" id="cd00392">
    <property type="entry name" value="Ribosomal_L13"/>
    <property type="match status" value="1"/>
</dbReference>
<dbReference type="Gene3D" id="3.90.1180.10">
    <property type="entry name" value="Ribosomal protein L13"/>
    <property type="match status" value="1"/>
</dbReference>
<dbReference type="HAMAP" id="MF_01366">
    <property type="entry name" value="Ribosomal_uL13"/>
    <property type="match status" value="1"/>
</dbReference>
<dbReference type="InterPro" id="IPR005822">
    <property type="entry name" value="Ribosomal_uL13"/>
</dbReference>
<dbReference type="InterPro" id="IPR005823">
    <property type="entry name" value="Ribosomal_uL13_bac-type"/>
</dbReference>
<dbReference type="InterPro" id="IPR023563">
    <property type="entry name" value="Ribosomal_uL13_CS"/>
</dbReference>
<dbReference type="InterPro" id="IPR036899">
    <property type="entry name" value="Ribosomal_uL13_sf"/>
</dbReference>
<dbReference type="NCBIfam" id="TIGR01066">
    <property type="entry name" value="rplM_bact"/>
    <property type="match status" value="1"/>
</dbReference>
<dbReference type="PANTHER" id="PTHR11545:SF2">
    <property type="entry name" value="LARGE RIBOSOMAL SUBUNIT PROTEIN UL13M"/>
    <property type="match status" value="1"/>
</dbReference>
<dbReference type="PANTHER" id="PTHR11545">
    <property type="entry name" value="RIBOSOMAL PROTEIN L13"/>
    <property type="match status" value="1"/>
</dbReference>
<dbReference type="Pfam" id="PF00572">
    <property type="entry name" value="Ribosomal_L13"/>
    <property type="match status" value="1"/>
</dbReference>
<dbReference type="PIRSF" id="PIRSF002181">
    <property type="entry name" value="Ribosomal_L13"/>
    <property type="match status" value="1"/>
</dbReference>
<dbReference type="SUPFAM" id="SSF52161">
    <property type="entry name" value="Ribosomal protein L13"/>
    <property type="match status" value="1"/>
</dbReference>
<dbReference type="PROSITE" id="PS00783">
    <property type="entry name" value="RIBOSOMAL_L13"/>
    <property type="match status" value="1"/>
</dbReference>
<comment type="function">
    <text evidence="1">This protein is one of the early assembly proteins of the 50S ribosomal subunit, although it is not seen to bind rRNA by itself. It is important during the early stages of 50S assembly.</text>
</comment>
<comment type="subunit">
    <text evidence="1">Part of the 50S ribosomal subunit.</text>
</comment>
<comment type="similarity">
    <text evidence="1">Belongs to the universal ribosomal protein uL13 family.</text>
</comment>
<name>RL13_MYCPN</name>
<protein>
    <recommendedName>
        <fullName evidence="1">Large ribosomal subunit protein uL13</fullName>
    </recommendedName>
    <alternativeName>
        <fullName evidence="2">50S ribosomal protein L13</fullName>
    </alternativeName>
</protein>
<gene>
    <name evidence="1" type="primary">rplM</name>
    <name type="ordered locus">MPN_617</name>
    <name type="ORF">MP225</name>
</gene>
<proteinExistence type="evidence at protein level"/>